<reference key="1">
    <citation type="journal article" date="2006" name="Proc. Natl. Acad. Sci. U.S.A.">
        <title>The complete genome sequence of a chronic atrophic gastritis Helicobacter pylori strain: evolution during disease progression.</title>
        <authorList>
            <person name="Oh J.D."/>
            <person name="Kling-Baeckhed H."/>
            <person name="Giannakis M."/>
            <person name="Xu J."/>
            <person name="Fulton R.S."/>
            <person name="Fulton L.A."/>
            <person name="Cordum H.S."/>
            <person name="Wang C."/>
            <person name="Elliott G."/>
            <person name="Edwards J."/>
            <person name="Mardis E.R."/>
            <person name="Engstrand L.G."/>
            <person name="Gordon J.I."/>
        </authorList>
    </citation>
    <scope>NUCLEOTIDE SEQUENCE [LARGE SCALE GENOMIC DNA]</scope>
    <source>
        <strain>HPAG1</strain>
    </source>
</reference>
<accession>Q1CSD3</accession>
<sequence>MSQLKLEEISSVIEEKIKNFELDCDMAEVGKVVSYADGVAKVYGLNGVMSYEVLEFETGDKGVAANLEEDSVGVIVFGFGNNIKEGTSVKRTKNLMKVPVGDAVVGRVLNALGEPIDGKGEIETNEFSLIEQKAPGIMDRKSVHEPLQTGIKAIDALVPIGRGQRELIIGDKQTGKTTVAIDAIINQKGQNVICIYVAIGQKESTVAQVVRKLEEYGAMEYSVVINASASDSAAMQYLAPYSGVAMGEYFRDHARHALIVYDDLSKHAVAYREISLILRRPPGREAFPGDVFYIHSRLLERAAKLCDEKGAGSLTALPIVETQAGDVSAYIPTNIISITDGQIFLETDLFYSGIRPAINVGLSVSRVGGAAQIKATKQVSGTLRLDLAQYRELQAFTQFASDLDEASKKQLERGQRMVEVLKQAPYSPLPIEKQVVIIYAGAKGFLDSVSVKKVVDFEEQLHPFLEAKYPQVLEEIHTKKALDKDLEAMLRKVLEEFKLTYSE</sequence>
<organism>
    <name type="scientific">Helicobacter pylori (strain HPAG1)</name>
    <dbReference type="NCBI Taxonomy" id="357544"/>
    <lineage>
        <taxon>Bacteria</taxon>
        <taxon>Pseudomonadati</taxon>
        <taxon>Campylobacterota</taxon>
        <taxon>Epsilonproteobacteria</taxon>
        <taxon>Campylobacterales</taxon>
        <taxon>Helicobacteraceae</taxon>
        <taxon>Helicobacter</taxon>
    </lineage>
</organism>
<evidence type="ECO:0000255" key="1">
    <source>
        <dbReference type="HAMAP-Rule" id="MF_01346"/>
    </source>
</evidence>
<gene>
    <name evidence="1" type="primary">atpA</name>
    <name type="ordered locus">HPAG1_1072</name>
</gene>
<name>ATPA_HELPH</name>
<feature type="chain" id="PRO_0000256091" description="ATP synthase subunit alpha">
    <location>
        <begin position="1"/>
        <end position="503"/>
    </location>
</feature>
<feature type="binding site" evidence="1">
    <location>
        <begin position="170"/>
        <end position="177"/>
    </location>
    <ligand>
        <name>ATP</name>
        <dbReference type="ChEBI" id="CHEBI:30616"/>
    </ligand>
</feature>
<feature type="site" description="Required for activity" evidence="1">
    <location>
        <position position="363"/>
    </location>
</feature>
<proteinExistence type="inferred from homology"/>
<dbReference type="EC" id="7.1.2.2" evidence="1"/>
<dbReference type="EMBL" id="CP000241">
    <property type="protein sequence ID" value="ABF85139.1"/>
    <property type="molecule type" value="Genomic_DNA"/>
</dbReference>
<dbReference type="RefSeq" id="WP_000080490.1">
    <property type="nucleotide sequence ID" value="NC_008086.1"/>
</dbReference>
<dbReference type="SMR" id="Q1CSD3"/>
<dbReference type="KEGG" id="hpa:HPAG1_1072"/>
<dbReference type="HOGENOM" id="CLU_010091_2_1_7"/>
<dbReference type="GO" id="GO:0005886">
    <property type="term" value="C:plasma membrane"/>
    <property type="evidence" value="ECO:0007669"/>
    <property type="project" value="UniProtKB-SubCell"/>
</dbReference>
<dbReference type="GO" id="GO:0045259">
    <property type="term" value="C:proton-transporting ATP synthase complex"/>
    <property type="evidence" value="ECO:0007669"/>
    <property type="project" value="UniProtKB-KW"/>
</dbReference>
<dbReference type="GO" id="GO:0043531">
    <property type="term" value="F:ADP binding"/>
    <property type="evidence" value="ECO:0007669"/>
    <property type="project" value="TreeGrafter"/>
</dbReference>
<dbReference type="GO" id="GO:0005524">
    <property type="term" value="F:ATP binding"/>
    <property type="evidence" value="ECO:0007669"/>
    <property type="project" value="UniProtKB-UniRule"/>
</dbReference>
<dbReference type="GO" id="GO:0046933">
    <property type="term" value="F:proton-transporting ATP synthase activity, rotational mechanism"/>
    <property type="evidence" value="ECO:0007669"/>
    <property type="project" value="UniProtKB-UniRule"/>
</dbReference>
<dbReference type="CDD" id="cd18113">
    <property type="entry name" value="ATP-synt_F1_alpha_C"/>
    <property type="match status" value="1"/>
</dbReference>
<dbReference type="CDD" id="cd18116">
    <property type="entry name" value="ATP-synt_F1_alpha_N"/>
    <property type="match status" value="1"/>
</dbReference>
<dbReference type="CDD" id="cd01132">
    <property type="entry name" value="F1-ATPase_alpha_CD"/>
    <property type="match status" value="1"/>
</dbReference>
<dbReference type="FunFam" id="1.20.150.20:FF:000001">
    <property type="entry name" value="ATP synthase subunit alpha"/>
    <property type="match status" value="1"/>
</dbReference>
<dbReference type="FunFam" id="3.40.50.300:FF:000002">
    <property type="entry name" value="ATP synthase subunit alpha"/>
    <property type="match status" value="1"/>
</dbReference>
<dbReference type="Gene3D" id="2.40.30.20">
    <property type="match status" value="1"/>
</dbReference>
<dbReference type="Gene3D" id="1.20.150.20">
    <property type="entry name" value="ATP synthase alpha/beta chain, C-terminal domain"/>
    <property type="match status" value="1"/>
</dbReference>
<dbReference type="Gene3D" id="3.40.50.300">
    <property type="entry name" value="P-loop containing nucleotide triphosphate hydrolases"/>
    <property type="match status" value="1"/>
</dbReference>
<dbReference type="HAMAP" id="MF_01346">
    <property type="entry name" value="ATP_synth_alpha_bact"/>
    <property type="match status" value="1"/>
</dbReference>
<dbReference type="InterPro" id="IPR023366">
    <property type="entry name" value="ATP_synth_asu-like_sf"/>
</dbReference>
<dbReference type="InterPro" id="IPR000793">
    <property type="entry name" value="ATP_synth_asu_C"/>
</dbReference>
<dbReference type="InterPro" id="IPR038376">
    <property type="entry name" value="ATP_synth_asu_C_sf"/>
</dbReference>
<dbReference type="InterPro" id="IPR033732">
    <property type="entry name" value="ATP_synth_F1_a_nt-bd_dom"/>
</dbReference>
<dbReference type="InterPro" id="IPR005294">
    <property type="entry name" value="ATP_synth_F1_asu"/>
</dbReference>
<dbReference type="InterPro" id="IPR020003">
    <property type="entry name" value="ATPase_a/bsu_AS"/>
</dbReference>
<dbReference type="InterPro" id="IPR004100">
    <property type="entry name" value="ATPase_F1/V1/A1_a/bsu_N"/>
</dbReference>
<dbReference type="InterPro" id="IPR036121">
    <property type="entry name" value="ATPase_F1/V1/A1_a/bsu_N_sf"/>
</dbReference>
<dbReference type="InterPro" id="IPR000194">
    <property type="entry name" value="ATPase_F1/V1/A1_a/bsu_nucl-bd"/>
</dbReference>
<dbReference type="InterPro" id="IPR027417">
    <property type="entry name" value="P-loop_NTPase"/>
</dbReference>
<dbReference type="NCBIfam" id="TIGR00962">
    <property type="entry name" value="atpA"/>
    <property type="match status" value="1"/>
</dbReference>
<dbReference type="NCBIfam" id="NF009884">
    <property type="entry name" value="PRK13343.1"/>
    <property type="match status" value="1"/>
</dbReference>
<dbReference type="PANTHER" id="PTHR48082">
    <property type="entry name" value="ATP SYNTHASE SUBUNIT ALPHA, MITOCHONDRIAL"/>
    <property type="match status" value="1"/>
</dbReference>
<dbReference type="PANTHER" id="PTHR48082:SF2">
    <property type="entry name" value="ATP SYNTHASE SUBUNIT ALPHA, MITOCHONDRIAL"/>
    <property type="match status" value="1"/>
</dbReference>
<dbReference type="Pfam" id="PF00006">
    <property type="entry name" value="ATP-synt_ab"/>
    <property type="match status" value="1"/>
</dbReference>
<dbReference type="Pfam" id="PF00306">
    <property type="entry name" value="ATP-synt_ab_C"/>
    <property type="match status" value="1"/>
</dbReference>
<dbReference type="Pfam" id="PF02874">
    <property type="entry name" value="ATP-synt_ab_N"/>
    <property type="match status" value="1"/>
</dbReference>
<dbReference type="PIRSF" id="PIRSF039088">
    <property type="entry name" value="F_ATPase_subunit_alpha"/>
    <property type="match status" value="1"/>
</dbReference>
<dbReference type="SUPFAM" id="SSF47917">
    <property type="entry name" value="C-terminal domain of alpha and beta subunits of F1 ATP synthase"/>
    <property type="match status" value="1"/>
</dbReference>
<dbReference type="SUPFAM" id="SSF50615">
    <property type="entry name" value="N-terminal domain of alpha and beta subunits of F1 ATP synthase"/>
    <property type="match status" value="1"/>
</dbReference>
<dbReference type="SUPFAM" id="SSF52540">
    <property type="entry name" value="P-loop containing nucleoside triphosphate hydrolases"/>
    <property type="match status" value="1"/>
</dbReference>
<dbReference type="PROSITE" id="PS00152">
    <property type="entry name" value="ATPASE_ALPHA_BETA"/>
    <property type="match status" value="1"/>
</dbReference>
<keyword id="KW-0066">ATP synthesis</keyword>
<keyword id="KW-0067">ATP-binding</keyword>
<keyword id="KW-0997">Cell inner membrane</keyword>
<keyword id="KW-1003">Cell membrane</keyword>
<keyword id="KW-0139">CF(1)</keyword>
<keyword id="KW-0375">Hydrogen ion transport</keyword>
<keyword id="KW-0406">Ion transport</keyword>
<keyword id="KW-0472">Membrane</keyword>
<keyword id="KW-0547">Nucleotide-binding</keyword>
<keyword id="KW-1278">Translocase</keyword>
<keyword id="KW-0813">Transport</keyword>
<protein>
    <recommendedName>
        <fullName evidence="1">ATP synthase subunit alpha</fullName>
        <ecNumber evidence="1">7.1.2.2</ecNumber>
    </recommendedName>
    <alternativeName>
        <fullName evidence="1">ATP synthase F1 sector subunit alpha</fullName>
    </alternativeName>
    <alternativeName>
        <fullName evidence="1">F-ATPase subunit alpha</fullName>
    </alternativeName>
</protein>
<comment type="function">
    <text evidence="1">Produces ATP from ADP in the presence of a proton gradient across the membrane. The alpha chain is a regulatory subunit.</text>
</comment>
<comment type="catalytic activity">
    <reaction evidence="1">
        <text>ATP + H2O + 4 H(+)(in) = ADP + phosphate + 5 H(+)(out)</text>
        <dbReference type="Rhea" id="RHEA:57720"/>
        <dbReference type="ChEBI" id="CHEBI:15377"/>
        <dbReference type="ChEBI" id="CHEBI:15378"/>
        <dbReference type="ChEBI" id="CHEBI:30616"/>
        <dbReference type="ChEBI" id="CHEBI:43474"/>
        <dbReference type="ChEBI" id="CHEBI:456216"/>
        <dbReference type="EC" id="7.1.2.2"/>
    </reaction>
</comment>
<comment type="subunit">
    <text evidence="1">F-type ATPases have 2 components, CF(1) - the catalytic core - and CF(0) - the membrane proton channel. CF(1) has five subunits: alpha(3), beta(3), gamma(1), delta(1), epsilon(1). CF(0) has three main subunits: a(1), b(2) and c(9-12). The alpha and beta chains form an alternating ring which encloses part of the gamma chain. CF(1) is attached to CF(0) by a central stalk formed by the gamma and epsilon chains, while a peripheral stalk is formed by the delta and b chains.</text>
</comment>
<comment type="subcellular location">
    <subcellularLocation>
        <location evidence="1">Cell inner membrane</location>
        <topology evidence="1">Peripheral membrane protein</topology>
    </subcellularLocation>
</comment>
<comment type="similarity">
    <text evidence="1">Belongs to the ATPase alpha/beta chains family.</text>
</comment>